<comment type="function">
    <text evidence="2">Methyltransferase that modifies short-chain fatty acids. In vitro, catalyzes the transfer of the methyl group from S-adenosyl-L-methionine (SAM) to the double bond of phospholipid-linked oleic acid to produce tuberculostearic acid (10-methylstearic-acid or TSA).</text>
</comment>
<comment type="subcellular location">
    <subcellularLocation>
        <location evidence="2">Cytoplasm</location>
    </subcellularLocation>
</comment>
<comment type="similarity">
    <text evidence="4">Belongs to the CFA/CMAS family.</text>
</comment>
<dbReference type="EC" id="2.1.1.-" evidence="4"/>
<dbReference type="EMBL" id="AL123456">
    <property type="protein sequence ID" value="CCP43202.1"/>
    <property type="molecule type" value="Genomic_DNA"/>
</dbReference>
<dbReference type="RefSeq" id="WP_003900153.1">
    <property type="nucleotide sequence ID" value="NZ_NVQJ01000002.1"/>
</dbReference>
<dbReference type="RefSeq" id="YP_177729.1">
    <property type="nucleotide sequence ID" value="NC_000962.3"/>
</dbReference>
<dbReference type="PDB" id="7L9U">
    <property type="method" value="X-ray"/>
    <property type="resolution" value="1.55 A"/>
    <property type="chains" value="A=1-286"/>
</dbReference>
<dbReference type="PDB" id="7LXI">
    <property type="method" value="X-ray"/>
    <property type="resolution" value="1.95 A"/>
    <property type="chains" value="A=1-286"/>
</dbReference>
<dbReference type="PDB" id="7MCJ">
    <property type="method" value="X-ray"/>
    <property type="resolution" value="1.80 A"/>
    <property type="chains" value="A/B=1-286"/>
</dbReference>
<dbReference type="PDB" id="8T1A">
    <property type="method" value="X-ray"/>
    <property type="resolution" value="2.00 A"/>
    <property type="chains" value="A/B=1-286"/>
</dbReference>
<dbReference type="PDBsum" id="7L9U"/>
<dbReference type="PDBsum" id="7LXI"/>
<dbReference type="PDBsum" id="7MCJ"/>
<dbReference type="PDBsum" id="8T1A"/>
<dbReference type="SMR" id="Q6MX39"/>
<dbReference type="FunCoup" id="Q6MX39">
    <property type="interactions" value="7"/>
</dbReference>
<dbReference type="STRING" id="83332.Rv0469"/>
<dbReference type="PaxDb" id="83332-Rv0469"/>
<dbReference type="DNASU" id="886286"/>
<dbReference type="GeneID" id="886286"/>
<dbReference type="KEGG" id="mtu:Rv0469"/>
<dbReference type="KEGG" id="mtv:RVBD_0469"/>
<dbReference type="PATRIC" id="fig|83332.111.peg.513"/>
<dbReference type="TubercuList" id="Rv0469"/>
<dbReference type="eggNOG" id="COG2230">
    <property type="taxonomic scope" value="Bacteria"/>
</dbReference>
<dbReference type="HOGENOM" id="CLU_026434_3_0_11"/>
<dbReference type="InParanoid" id="Q6MX39"/>
<dbReference type="OrthoDB" id="9782855at2"/>
<dbReference type="PhylomeDB" id="Q6MX39"/>
<dbReference type="PHI-base" id="PHI:3633"/>
<dbReference type="Proteomes" id="UP000001584">
    <property type="component" value="Chromosome"/>
</dbReference>
<dbReference type="GO" id="GO:0005737">
    <property type="term" value="C:cytoplasm"/>
    <property type="evidence" value="ECO:0007669"/>
    <property type="project" value="UniProtKB-SubCell"/>
</dbReference>
<dbReference type="GO" id="GO:0005886">
    <property type="term" value="C:plasma membrane"/>
    <property type="evidence" value="ECO:0007005"/>
    <property type="project" value="MTBBASE"/>
</dbReference>
<dbReference type="GO" id="GO:0008825">
    <property type="term" value="F:cyclopropane-fatty-acyl-phospholipid synthase activity"/>
    <property type="evidence" value="ECO:0000318"/>
    <property type="project" value="GO_Central"/>
</dbReference>
<dbReference type="GO" id="GO:0008610">
    <property type="term" value="P:lipid biosynthetic process"/>
    <property type="evidence" value="ECO:0000318"/>
    <property type="project" value="GO_Central"/>
</dbReference>
<dbReference type="GO" id="GO:0032259">
    <property type="term" value="P:methylation"/>
    <property type="evidence" value="ECO:0007669"/>
    <property type="project" value="UniProtKB-KW"/>
</dbReference>
<dbReference type="CDD" id="cd02440">
    <property type="entry name" value="AdoMet_MTases"/>
    <property type="match status" value="1"/>
</dbReference>
<dbReference type="FunFam" id="3.40.50.150:FF:000115">
    <property type="entry name" value="Cyclopropane mycolic acid synthase 1"/>
    <property type="match status" value="1"/>
</dbReference>
<dbReference type="Gene3D" id="3.40.50.150">
    <property type="entry name" value="Vaccinia Virus protein VP39"/>
    <property type="match status" value="1"/>
</dbReference>
<dbReference type="InterPro" id="IPR050723">
    <property type="entry name" value="CFA/CMAS"/>
</dbReference>
<dbReference type="InterPro" id="IPR003333">
    <property type="entry name" value="CMAS"/>
</dbReference>
<dbReference type="InterPro" id="IPR047672">
    <property type="entry name" value="CMAS_actinobact"/>
</dbReference>
<dbReference type="InterPro" id="IPR029063">
    <property type="entry name" value="SAM-dependent_MTases_sf"/>
</dbReference>
<dbReference type="NCBIfam" id="NF040660">
    <property type="entry name" value="mycolic_MTase"/>
    <property type="match status" value="1"/>
</dbReference>
<dbReference type="PANTHER" id="PTHR43667">
    <property type="entry name" value="CYCLOPROPANE-FATTY-ACYL-PHOSPHOLIPID SYNTHASE"/>
    <property type="match status" value="1"/>
</dbReference>
<dbReference type="PANTHER" id="PTHR43667:SF1">
    <property type="entry name" value="CYCLOPROPANE-FATTY-ACYL-PHOSPHOLIPID SYNTHASE"/>
    <property type="match status" value="1"/>
</dbReference>
<dbReference type="Pfam" id="PF02353">
    <property type="entry name" value="CMAS"/>
    <property type="match status" value="1"/>
</dbReference>
<dbReference type="PIRSF" id="PIRSF003085">
    <property type="entry name" value="CMAS"/>
    <property type="match status" value="1"/>
</dbReference>
<dbReference type="SUPFAM" id="SSF53335">
    <property type="entry name" value="S-adenosyl-L-methionine-dependent methyltransferases"/>
    <property type="match status" value="1"/>
</dbReference>
<reference key="1">
    <citation type="journal article" date="1998" name="Nature">
        <title>Deciphering the biology of Mycobacterium tuberculosis from the complete genome sequence.</title>
        <authorList>
            <person name="Cole S.T."/>
            <person name="Brosch R."/>
            <person name="Parkhill J."/>
            <person name="Garnier T."/>
            <person name="Churcher C.M."/>
            <person name="Harris D.E."/>
            <person name="Gordon S.V."/>
            <person name="Eiglmeier K."/>
            <person name="Gas S."/>
            <person name="Barry C.E. III"/>
            <person name="Tekaia F."/>
            <person name="Badcock K."/>
            <person name="Basham D."/>
            <person name="Brown D."/>
            <person name="Chillingworth T."/>
            <person name="Connor R."/>
            <person name="Davies R.M."/>
            <person name="Devlin K."/>
            <person name="Feltwell T."/>
            <person name="Gentles S."/>
            <person name="Hamlin N."/>
            <person name="Holroyd S."/>
            <person name="Hornsby T."/>
            <person name="Jagels K."/>
            <person name="Krogh A."/>
            <person name="McLean J."/>
            <person name="Moule S."/>
            <person name="Murphy L.D."/>
            <person name="Oliver S."/>
            <person name="Osborne J."/>
            <person name="Quail M.A."/>
            <person name="Rajandream M.A."/>
            <person name="Rogers J."/>
            <person name="Rutter S."/>
            <person name="Seeger K."/>
            <person name="Skelton S."/>
            <person name="Squares S."/>
            <person name="Squares R."/>
            <person name="Sulston J.E."/>
            <person name="Taylor K."/>
            <person name="Whitehead S."/>
            <person name="Barrell B.G."/>
        </authorList>
    </citation>
    <scope>NUCLEOTIDE SEQUENCE [LARGE SCALE GENOMIC DNA]</scope>
    <source>
        <strain>ATCC 25618 / H37Rv</strain>
    </source>
</reference>
<reference key="2">
    <citation type="journal article" date="2011" name="Mol. Cell. Proteomics">
        <title>Proteogenomic analysis of Mycobacterium tuberculosis by high resolution mass spectrometry.</title>
        <authorList>
            <person name="Kelkar D.S."/>
            <person name="Kumar D."/>
            <person name="Kumar P."/>
            <person name="Balakrishnan L."/>
            <person name="Muthusamy B."/>
            <person name="Yadav A.K."/>
            <person name="Shrivastava P."/>
            <person name="Marimuthu A."/>
            <person name="Anand S."/>
            <person name="Sundaram H."/>
            <person name="Kingsbury R."/>
            <person name="Harsha H.C."/>
            <person name="Nair B."/>
            <person name="Prasad T.S."/>
            <person name="Chauhan D.S."/>
            <person name="Katoch K."/>
            <person name="Katoch V.M."/>
            <person name="Kumar P."/>
            <person name="Chaerkady R."/>
            <person name="Ramachandran S."/>
            <person name="Dash D."/>
            <person name="Pandey A."/>
        </authorList>
    </citation>
    <scope>IDENTIFICATION BY MASS SPECTROMETRY [LARGE SCALE ANALYSIS]</scope>
    <source>
        <strain>ATCC 25618 / H37Rv</strain>
    </source>
</reference>
<reference key="3">
    <citation type="journal article" date="2013" name="Biol. Chem.">
        <title>Biochemical characterization of an S-adenosyl-l-methionine-dependent methyltransferase (Rv0469) of Mycobacterium tuberculosis.</title>
        <authorList>
            <person name="Meena L.S."/>
            <person name="Chopra P."/>
            <person name="Vishwakarma R.A."/>
            <person name="Singh Y."/>
        </authorList>
    </citation>
    <scope>FUNCTION AS A METHYLTRANSFERASE</scope>
    <scope>SUBCELLULAR LOCATION</scope>
    <source>
        <strain>H37Rv</strain>
    </source>
</reference>
<proteinExistence type="evidence at protein level"/>
<protein>
    <recommendedName>
        <fullName evidence="4">S-adenosylmethionine-dependent methyltransferase UmaA</fullName>
        <shortName evidence="4">SAM-dependent methyltransferase UmaA</shortName>
        <ecNumber evidence="4">2.1.1.-</ecNumber>
    </recommendedName>
</protein>
<keyword id="KW-0002">3D-structure</keyword>
<keyword id="KW-0963">Cytoplasm</keyword>
<keyword id="KW-0443">Lipid metabolism</keyword>
<keyword id="KW-0489">Methyltransferase</keyword>
<keyword id="KW-1185">Reference proteome</keyword>
<keyword id="KW-0949">S-adenosyl-L-methionine</keyword>
<keyword id="KW-0808">Transferase</keyword>
<feature type="chain" id="PRO_0000434597" description="S-adenosylmethionine-dependent methyltransferase UmaA">
    <location>
        <begin position="1"/>
        <end position="286"/>
    </location>
</feature>
<feature type="active site" evidence="1">
    <location>
        <position position="268"/>
    </location>
</feature>
<feature type="binding site" evidence="1">
    <location>
        <begin position="32"/>
        <end position="33"/>
    </location>
    <ligand>
        <name>S-adenosyl-L-methionine</name>
        <dbReference type="ChEBI" id="CHEBI:59789"/>
    </ligand>
</feature>
<feature type="binding site" evidence="1">
    <location>
        <begin position="67"/>
        <end position="75"/>
    </location>
    <ligand>
        <name>S-adenosyl-L-methionine</name>
        <dbReference type="ChEBI" id="CHEBI:59789"/>
    </ligand>
</feature>
<feature type="binding site" evidence="1">
    <location>
        <begin position="93"/>
        <end position="98"/>
    </location>
    <ligand>
        <name>S-adenosyl-L-methionine</name>
        <dbReference type="ChEBI" id="CHEBI:59789"/>
    </ligand>
</feature>
<feature type="binding site" evidence="1">
    <location>
        <begin position="122"/>
        <end position="123"/>
    </location>
    <ligand>
        <name>S-adenosyl-L-methionine</name>
        <dbReference type="ChEBI" id="CHEBI:59789"/>
    </ligand>
</feature>
<feature type="helix" evidence="6">
    <location>
        <begin position="14"/>
        <end position="16"/>
    </location>
</feature>
<feature type="helix" evidence="6">
    <location>
        <begin position="19"/>
        <end position="22"/>
    </location>
</feature>
<feature type="turn" evidence="6">
    <location>
        <begin position="23"/>
        <end position="25"/>
    </location>
</feature>
<feature type="helix" evidence="6">
    <location>
        <begin position="44"/>
        <end position="57"/>
    </location>
</feature>
<feature type="turn" evidence="6">
    <location>
        <begin position="58"/>
        <end position="60"/>
    </location>
</feature>
<feature type="strand" evidence="6">
    <location>
        <begin position="66"/>
        <end position="71"/>
    </location>
</feature>
<feature type="helix" evidence="6">
    <location>
        <begin position="76"/>
        <end position="84"/>
    </location>
</feature>
<feature type="strand" evidence="6">
    <location>
        <begin position="88"/>
        <end position="94"/>
    </location>
</feature>
<feature type="helix" evidence="6">
    <location>
        <begin position="96"/>
        <end position="107"/>
    </location>
</feature>
<feature type="strand" evidence="6">
    <location>
        <begin position="115"/>
        <end position="119"/>
    </location>
</feature>
<feature type="helix" evidence="6">
    <location>
        <begin position="122"/>
        <end position="124"/>
    </location>
</feature>
<feature type="strand" evidence="6">
    <location>
        <begin position="130"/>
        <end position="136"/>
    </location>
</feature>
<feature type="helix" evidence="6">
    <location>
        <begin position="138"/>
        <end position="140"/>
    </location>
</feature>
<feature type="helix" evidence="6">
    <location>
        <begin position="143"/>
        <end position="145"/>
    </location>
</feature>
<feature type="helix" evidence="6">
    <location>
        <begin position="146"/>
        <end position="156"/>
    </location>
</feature>
<feature type="strand" evidence="6">
    <location>
        <begin position="162"/>
        <end position="170"/>
    </location>
</feature>
<feature type="helix" evidence="6">
    <location>
        <begin position="173"/>
        <end position="179"/>
    </location>
</feature>
<feature type="helix" evidence="6">
    <location>
        <begin position="185"/>
        <end position="197"/>
    </location>
</feature>
<feature type="helix" evidence="6">
    <location>
        <begin position="207"/>
        <end position="216"/>
    </location>
</feature>
<feature type="strand" evidence="6">
    <location>
        <begin position="220"/>
        <end position="226"/>
    </location>
</feature>
<feature type="helix" evidence="6">
    <location>
        <begin position="228"/>
        <end position="244"/>
    </location>
</feature>
<feature type="helix" evidence="6">
    <location>
        <begin position="246"/>
        <end position="252"/>
    </location>
</feature>
<feature type="helix" evidence="6">
    <location>
        <begin position="255"/>
        <end position="273"/>
    </location>
</feature>
<feature type="strand" evidence="6">
    <location>
        <begin position="276"/>
        <end position="285"/>
    </location>
</feature>
<sequence>MTELRPFYEESQSIYDVSDEFFSLFLDPTMAYTCAYFEREDMTLEEAQNAKFDLALDKLHLEPGMTLLDIGCGWGGGLQRAIENYDVNVIGITLSRNQFEYSKAKLAKIPTERSVQVRLQGWDEFTDKVDRIVSIGAFEAFKMERYAAFFERSYDILPDDGRMLLHTILTYTQKQMHEMGVKVTMSDVRFMKFIGEEIFPGGQLPAQEDIFKFAQAADFSVEKVQLLQQHYARTLNIWAANLEANKDRAIALQSEEIYNKYMHYLTGCEHFFRKGISNVGQFTLTK</sequence>
<organism>
    <name type="scientific">Mycobacterium tuberculosis (strain ATCC 25618 / H37Rv)</name>
    <dbReference type="NCBI Taxonomy" id="83332"/>
    <lineage>
        <taxon>Bacteria</taxon>
        <taxon>Bacillati</taxon>
        <taxon>Actinomycetota</taxon>
        <taxon>Actinomycetes</taxon>
        <taxon>Mycobacteriales</taxon>
        <taxon>Mycobacteriaceae</taxon>
        <taxon>Mycobacterium</taxon>
        <taxon>Mycobacterium tuberculosis complex</taxon>
    </lineage>
</organism>
<gene>
    <name evidence="3 5" type="primary">umaA</name>
    <name evidence="5" type="ordered locus">Rv0469</name>
</gene>
<accession>Q6MX39</accession>
<accession>I6Y3U9</accession>
<accession>L0T6S0</accession>
<evidence type="ECO:0000250" key="1">
    <source>
        <dbReference type="UniProtKB" id="P9WPB7"/>
    </source>
</evidence>
<evidence type="ECO:0000269" key="2">
    <source>
    </source>
</evidence>
<evidence type="ECO:0000303" key="3">
    <source>
    </source>
</evidence>
<evidence type="ECO:0000305" key="4"/>
<evidence type="ECO:0000312" key="5">
    <source>
        <dbReference type="EMBL" id="CCP43202.1"/>
    </source>
</evidence>
<evidence type="ECO:0007829" key="6">
    <source>
        <dbReference type="PDB" id="7L9U"/>
    </source>
</evidence>
<name>UMAA_MYCTU</name>